<evidence type="ECO:0000255" key="1">
    <source>
        <dbReference type="HAMAP-Rule" id="MF_00033"/>
    </source>
</evidence>
<accession>A6TS61</accession>
<sequence>MRIMISGGGTGGHIYPAIAIANQITEKHPQAKIQFVGTAKGLESELIPKAGYEIKHITVSYLRRKISFHNVKSIAKLIKGLVEARRLIKDFNPDVVIGTGGFVCGPVLYMATKLGYKTLIHEQNVFPGLTNRVLGNYVDRIALSFEEAERYFKSKEKLIITGNPIRREFLEISQEEATQKYNSGSKKHLILVVGGSGGAARINETVVNLLKKHPNNDFKILLVTGQRHFETIKLQLGKKQDTLRYNDVLPYLTNMPHALKACDLLICSAGAITIAEVTAVGKPAIIIPKSYTAGNHQEFNAKALEEKGAAIMIKEEVLNADRLYLEITGLLSDKKRLEQMAKASALSAKTQALEMIYAEVISMIKS</sequence>
<name>MURG_ALKMQ</name>
<comment type="function">
    <text evidence="1">Cell wall formation. Catalyzes the transfer of a GlcNAc subunit on undecaprenyl-pyrophosphoryl-MurNAc-pentapeptide (lipid intermediate I) to form undecaprenyl-pyrophosphoryl-MurNAc-(pentapeptide)GlcNAc (lipid intermediate II).</text>
</comment>
<comment type="catalytic activity">
    <reaction evidence="1">
        <text>di-trans,octa-cis-undecaprenyl diphospho-N-acetyl-alpha-D-muramoyl-L-alanyl-D-glutamyl-meso-2,6-diaminopimeloyl-D-alanyl-D-alanine + UDP-N-acetyl-alpha-D-glucosamine = di-trans,octa-cis-undecaprenyl diphospho-[N-acetyl-alpha-D-glucosaminyl-(1-&gt;4)]-N-acetyl-alpha-D-muramoyl-L-alanyl-D-glutamyl-meso-2,6-diaminopimeloyl-D-alanyl-D-alanine + UDP + H(+)</text>
        <dbReference type="Rhea" id="RHEA:31227"/>
        <dbReference type="ChEBI" id="CHEBI:15378"/>
        <dbReference type="ChEBI" id="CHEBI:57705"/>
        <dbReference type="ChEBI" id="CHEBI:58223"/>
        <dbReference type="ChEBI" id="CHEBI:61387"/>
        <dbReference type="ChEBI" id="CHEBI:61388"/>
        <dbReference type="EC" id="2.4.1.227"/>
    </reaction>
</comment>
<comment type="pathway">
    <text evidence="1">Cell wall biogenesis; peptidoglycan biosynthesis.</text>
</comment>
<comment type="subcellular location">
    <subcellularLocation>
        <location evidence="1">Cell membrane</location>
        <topology evidence="1">Peripheral membrane protein</topology>
        <orientation evidence="1">Cytoplasmic side</orientation>
    </subcellularLocation>
</comment>
<comment type="similarity">
    <text evidence="1">Belongs to the glycosyltransferase 28 family. MurG subfamily.</text>
</comment>
<reference key="1">
    <citation type="journal article" date="2016" name="Genome Announc.">
        <title>Complete genome sequence of Alkaliphilus metalliredigens strain QYMF, an alkaliphilic and metal-reducing bacterium isolated from borax-contaminated leachate ponds.</title>
        <authorList>
            <person name="Hwang C."/>
            <person name="Copeland A."/>
            <person name="Lucas S."/>
            <person name="Lapidus A."/>
            <person name="Barry K."/>
            <person name="Detter J.C."/>
            <person name="Glavina Del Rio T."/>
            <person name="Hammon N."/>
            <person name="Israni S."/>
            <person name="Dalin E."/>
            <person name="Tice H."/>
            <person name="Pitluck S."/>
            <person name="Chertkov O."/>
            <person name="Brettin T."/>
            <person name="Bruce D."/>
            <person name="Han C."/>
            <person name="Schmutz J."/>
            <person name="Larimer F."/>
            <person name="Land M.L."/>
            <person name="Hauser L."/>
            <person name="Kyrpides N."/>
            <person name="Mikhailova N."/>
            <person name="Ye Q."/>
            <person name="Zhou J."/>
            <person name="Richardson P."/>
            <person name="Fields M.W."/>
        </authorList>
    </citation>
    <scope>NUCLEOTIDE SEQUENCE [LARGE SCALE GENOMIC DNA]</scope>
    <source>
        <strain>QYMF</strain>
    </source>
</reference>
<keyword id="KW-0131">Cell cycle</keyword>
<keyword id="KW-0132">Cell division</keyword>
<keyword id="KW-1003">Cell membrane</keyword>
<keyword id="KW-0133">Cell shape</keyword>
<keyword id="KW-0961">Cell wall biogenesis/degradation</keyword>
<keyword id="KW-0328">Glycosyltransferase</keyword>
<keyword id="KW-0472">Membrane</keyword>
<keyword id="KW-0573">Peptidoglycan synthesis</keyword>
<keyword id="KW-1185">Reference proteome</keyword>
<keyword id="KW-0808">Transferase</keyword>
<protein>
    <recommendedName>
        <fullName evidence="1">UDP-N-acetylglucosamine--N-acetylmuramyl-(pentapeptide) pyrophosphoryl-undecaprenol N-acetylglucosamine transferase</fullName>
        <ecNumber evidence="1">2.4.1.227</ecNumber>
    </recommendedName>
    <alternativeName>
        <fullName evidence="1">Undecaprenyl-PP-MurNAc-pentapeptide-UDPGlcNAc GlcNAc transferase</fullName>
    </alternativeName>
</protein>
<organism>
    <name type="scientific">Alkaliphilus metalliredigens (strain QYMF)</name>
    <dbReference type="NCBI Taxonomy" id="293826"/>
    <lineage>
        <taxon>Bacteria</taxon>
        <taxon>Bacillati</taxon>
        <taxon>Bacillota</taxon>
        <taxon>Clostridia</taxon>
        <taxon>Peptostreptococcales</taxon>
        <taxon>Natronincolaceae</taxon>
        <taxon>Alkaliphilus</taxon>
    </lineage>
</organism>
<proteinExistence type="inferred from homology"/>
<feature type="chain" id="PRO_1000057243" description="UDP-N-acetylglucosamine--N-acetylmuramyl-(pentapeptide) pyrophosphoryl-undecaprenol N-acetylglucosamine transferase">
    <location>
        <begin position="1"/>
        <end position="366"/>
    </location>
</feature>
<feature type="binding site" evidence="1">
    <location>
        <begin position="10"/>
        <end position="12"/>
    </location>
    <ligand>
        <name>UDP-N-acetyl-alpha-D-glucosamine</name>
        <dbReference type="ChEBI" id="CHEBI:57705"/>
    </ligand>
</feature>
<feature type="binding site" evidence="1">
    <location>
        <position position="124"/>
    </location>
    <ligand>
        <name>UDP-N-acetyl-alpha-D-glucosamine</name>
        <dbReference type="ChEBI" id="CHEBI:57705"/>
    </ligand>
</feature>
<feature type="binding site" evidence="1">
    <location>
        <position position="166"/>
    </location>
    <ligand>
        <name>UDP-N-acetyl-alpha-D-glucosamine</name>
        <dbReference type="ChEBI" id="CHEBI:57705"/>
    </ligand>
</feature>
<feature type="binding site" evidence="1">
    <location>
        <position position="196"/>
    </location>
    <ligand>
        <name>UDP-N-acetyl-alpha-D-glucosamine</name>
        <dbReference type="ChEBI" id="CHEBI:57705"/>
    </ligand>
</feature>
<feature type="binding site" evidence="1">
    <location>
        <position position="297"/>
    </location>
    <ligand>
        <name>UDP-N-acetyl-alpha-D-glucosamine</name>
        <dbReference type="ChEBI" id="CHEBI:57705"/>
    </ligand>
</feature>
<gene>
    <name evidence="1" type="primary">murG</name>
    <name type="ordered locus">Amet_2879</name>
</gene>
<dbReference type="EC" id="2.4.1.227" evidence="1"/>
<dbReference type="EMBL" id="CP000724">
    <property type="protein sequence ID" value="ABR49029.1"/>
    <property type="molecule type" value="Genomic_DNA"/>
</dbReference>
<dbReference type="RefSeq" id="WP_012063997.1">
    <property type="nucleotide sequence ID" value="NC_009633.1"/>
</dbReference>
<dbReference type="SMR" id="A6TS61"/>
<dbReference type="STRING" id="293826.Amet_2879"/>
<dbReference type="CAZy" id="GT28">
    <property type="family name" value="Glycosyltransferase Family 28"/>
</dbReference>
<dbReference type="KEGG" id="amt:Amet_2879"/>
<dbReference type="eggNOG" id="COG0707">
    <property type="taxonomic scope" value="Bacteria"/>
</dbReference>
<dbReference type="HOGENOM" id="CLU_037404_0_1_9"/>
<dbReference type="OrthoDB" id="9808936at2"/>
<dbReference type="UniPathway" id="UPA00219"/>
<dbReference type="Proteomes" id="UP000001572">
    <property type="component" value="Chromosome"/>
</dbReference>
<dbReference type="GO" id="GO:0005886">
    <property type="term" value="C:plasma membrane"/>
    <property type="evidence" value="ECO:0007669"/>
    <property type="project" value="UniProtKB-SubCell"/>
</dbReference>
<dbReference type="GO" id="GO:0051991">
    <property type="term" value="F:UDP-N-acetyl-D-glucosamine:N-acetylmuramoyl-L-alanyl-D-glutamyl-meso-2,6-diaminopimelyl-D-alanyl-D-alanine-diphosphoundecaprenol 4-beta-N-acetylglucosaminlytransferase activity"/>
    <property type="evidence" value="ECO:0007669"/>
    <property type="project" value="RHEA"/>
</dbReference>
<dbReference type="GO" id="GO:0050511">
    <property type="term" value="F:undecaprenyldiphospho-muramoylpentapeptide beta-N-acetylglucosaminyltransferase activity"/>
    <property type="evidence" value="ECO:0007669"/>
    <property type="project" value="UniProtKB-UniRule"/>
</dbReference>
<dbReference type="GO" id="GO:0005975">
    <property type="term" value="P:carbohydrate metabolic process"/>
    <property type="evidence" value="ECO:0007669"/>
    <property type="project" value="InterPro"/>
</dbReference>
<dbReference type="GO" id="GO:0051301">
    <property type="term" value="P:cell division"/>
    <property type="evidence" value="ECO:0007669"/>
    <property type="project" value="UniProtKB-KW"/>
</dbReference>
<dbReference type="GO" id="GO:0071555">
    <property type="term" value="P:cell wall organization"/>
    <property type="evidence" value="ECO:0007669"/>
    <property type="project" value="UniProtKB-KW"/>
</dbReference>
<dbReference type="GO" id="GO:0030259">
    <property type="term" value="P:lipid glycosylation"/>
    <property type="evidence" value="ECO:0007669"/>
    <property type="project" value="UniProtKB-UniRule"/>
</dbReference>
<dbReference type="GO" id="GO:0009252">
    <property type="term" value="P:peptidoglycan biosynthetic process"/>
    <property type="evidence" value="ECO:0007669"/>
    <property type="project" value="UniProtKB-UniRule"/>
</dbReference>
<dbReference type="GO" id="GO:0008360">
    <property type="term" value="P:regulation of cell shape"/>
    <property type="evidence" value="ECO:0007669"/>
    <property type="project" value="UniProtKB-KW"/>
</dbReference>
<dbReference type="CDD" id="cd03785">
    <property type="entry name" value="GT28_MurG"/>
    <property type="match status" value="1"/>
</dbReference>
<dbReference type="Gene3D" id="3.40.50.2000">
    <property type="entry name" value="Glycogen Phosphorylase B"/>
    <property type="match status" value="2"/>
</dbReference>
<dbReference type="HAMAP" id="MF_00033">
    <property type="entry name" value="MurG"/>
    <property type="match status" value="1"/>
</dbReference>
<dbReference type="InterPro" id="IPR006009">
    <property type="entry name" value="GlcNAc_MurG"/>
</dbReference>
<dbReference type="InterPro" id="IPR007235">
    <property type="entry name" value="Glyco_trans_28_C"/>
</dbReference>
<dbReference type="InterPro" id="IPR004276">
    <property type="entry name" value="GlycoTrans_28_N"/>
</dbReference>
<dbReference type="NCBIfam" id="TIGR01133">
    <property type="entry name" value="murG"/>
    <property type="match status" value="1"/>
</dbReference>
<dbReference type="PANTHER" id="PTHR21015:SF22">
    <property type="entry name" value="GLYCOSYLTRANSFERASE"/>
    <property type="match status" value="1"/>
</dbReference>
<dbReference type="PANTHER" id="PTHR21015">
    <property type="entry name" value="UDP-N-ACETYLGLUCOSAMINE--N-ACETYLMURAMYL-(PENTAPEPTIDE) PYROPHOSPHORYL-UNDECAPRENOL N-ACETYLGLUCOSAMINE TRANSFERASE 1"/>
    <property type="match status" value="1"/>
</dbReference>
<dbReference type="Pfam" id="PF04101">
    <property type="entry name" value="Glyco_tran_28_C"/>
    <property type="match status" value="1"/>
</dbReference>
<dbReference type="Pfam" id="PF03033">
    <property type="entry name" value="Glyco_transf_28"/>
    <property type="match status" value="1"/>
</dbReference>
<dbReference type="SUPFAM" id="SSF53756">
    <property type="entry name" value="UDP-Glycosyltransferase/glycogen phosphorylase"/>
    <property type="match status" value="1"/>
</dbReference>